<accession>Q48QT6</accession>
<protein>
    <recommendedName>
        <fullName evidence="1">DNA mismatch repair protein MutS</fullName>
    </recommendedName>
</protein>
<sequence>MAKTNISPGMQQYLDIKKDYPDAFLLFRMGDFYELFYEDAVKAAQLLEIGLTSRNKNAENPIPMAGVPHHSAQQYIDVLIELGYKVAVAEQMEDPKQAVGVVKREVVQVITPGTVVDSAKPDSANNFLVAVDFDGCRYGLAYMDVSTGEFCVTDLADFTSVRSEIQNLKAKEVLLGFDLSEEEQTILVKQMNLLLSYEETVYEDKSLIDGQLTTVELTAAGKLLQYVHKTQMRELSHLQALVHYEIKDYLQMSYATKSSLDLVENARTNKKHGSLYWLLDETKTAMGMRLLRSWIDRPLVSKEAILERQEIIQVFLNAFIERTDLSNSLKGVYDIERLSSRVSFGKANPKDLLQLGHTLAQVPYIKAILESFDSPCVDKLVNDIDSLPELEYLIRTAIDPDAPATISEGSIIRTGFDERLDHYRKVMREGTGWIADIEAKERQASGINNLKIDYNKKDGYYFHVTNSNLSLVPEHFFRKATLKNSERYGTAELAKIEGQMLEAREESSSLEYDIFMCIRAQVETYINRLQKLAKILATVDVLQSLAVVAETNHYIRPQFNDNHVITIQEGRHAVVEKVMGVQEYIPNSISFDQQTSIQLITGPNMSGKSTYMRQLALTVIMAQMGSFVAADHVDLPLFDAIFTRIGAADDLISGQSTFMVEMMEANQAIKRASDNSLILFDELGRGTATYDGMALAQAIIEYIHDRVGAKTIFATHYHELTDLSTKLTSLVNVHVATLEKDGDVTFLHKIAEGPADKSYGIHVAKIAGLPKSLLKRADEVLTRLETQSRSTEIISVPSQVESSSAVRQGQLSLFGDEEKAHEIRQALEAIDVMNMTPLQAMTTLYELKKLL</sequence>
<name>MUTS_STRPM</name>
<keyword id="KW-0067">ATP-binding</keyword>
<keyword id="KW-0227">DNA damage</keyword>
<keyword id="KW-0234">DNA repair</keyword>
<keyword id="KW-0238">DNA-binding</keyword>
<keyword id="KW-0547">Nucleotide-binding</keyword>
<proteinExistence type="inferred from homology"/>
<organism>
    <name type="scientific">Streptococcus pyogenes serotype M28 (strain MGAS6180)</name>
    <dbReference type="NCBI Taxonomy" id="319701"/>
    <lineage>
        <taxon>Bacteria</taxon>
        <taxon>Bacillati</taxon>
        <taxon>Bacillota</taxon>
        <taxon>Bacilli</taxon>
        <taxon>Lactobacillales</taxon>
        <taxon>Streptococcaceae</taxon>
        <taxon>Streptococcus</taxon>
    </lineage>
</organism>
<dbReference type="EMBL" id="CP000056">
    <property type="protein sequence ID" value="AAX72924.1"/>
    <property type="molecule type" value="Genomic_DNA"/>
</dbReference>
<dbReference type="RefSeq" id="WP_011285287.1">
    <property type="nucleotide sequence ID" value="NC_007296.2"/>
</dbReference>
<dbReference type="SMR" id="Q48QT6"/>
<dbReference type="KEGG" id="spb:M28_Spy1814"/>
<dbReference type="HOGENOM" id="CLU_002472_3_1_9"/>
<dbReference type="GO" id="GO:0005829">
    <property type="term" value="C:cytosol"/>
    <property type="evidence" value="ECO:0007669"/>
    <property type="project" value="TreeGrafter"/>
</dbReference>
<dbReference type="GO" id="GO:0005524">
    <property type="term" value="F:ATP binding"/>
    <property type="evidence" value="ECO:0007669"/>
    <property type="project" value="UniProtKB-UniRule"/>
</dbReference>
<dbReference type="GO" id="GO:0140664">
    <property type="term" value="F:ATP-dependent DNA damage sensor activity"/>
    <property type="evidence" value="ECO:0007669"/>
    <property type="project" value="InterPro"/>
</dbReference>
<dbReference type="GO" id="GO:0003684">
    <property type="term" value="F:damaged DNA binding"/>
    <property type="evidence" value="ECO:0007669"/>
    <property type="project" value="UniProtKB-UniRule"/>
</dbReference>
<dbReference type="GO" id="GO:0030983">
    <property type="term" value="F:mismatched DNA binding"/>
    <property type="evidence" value="ECO:0007669"/>
    <property type="project" value="InterPro"/>
</dbReference>
<dbReference type="GO" id="GO:0006298">
    <property type="term" value="P:mismatch repair"/>
    <property type="evidence" value="ECO:0007669"/>
    <property type="project" value="UniProtKB-UniRule"/>
</dbReference>
<dbReference type="CDD" id="cd03284">
    <property type="entry name" value="ABC_MutS1"/>
    <property type="match status" value="1"/>
</dbReference>
<dbReference type="FunFam" id="1.10.1420.10:FF:000001">
    <property type="entry name" value="DNA mismatch repair protein MutS"/>
    <property type="match status" value="1"/>
</dbReference>
<dbReference type="FunFam" id="3.40.1170.10:FF:000001">
    <property type="entry name" value="DNA mismatch repair protein MutS"/>
    <property type="match status" value="1"/>
</dbReference>
<dbReference type="FunFam" id="3.40.50.300:FF:000896">
    <property type="entry name" value="DNA mismatch repair protein MutS"/>
    <property type="match status" value="1"/>
</dbReference>
<dbReference type="Gene3D" id="1.10.1420.10">
    <property type="match status" value="2"/>
</dbReference>
<dbReference type="Gene3D" id="3.40.1170.10">
    <property type="entry name" value="DNA repair protein MutS, domain I"/>
    <property type="match status" value="1"/>
</dbReference>
<dbReference type="Gene3D" id="3.30.420.110">
    <property type="entry name" value="MutS, connector domain"/>
    <property type="match status" value="1"/>
</dbReference>
<dbReference type="Gene3D" id="3.40.50.300">
    <property type="entry name" value="P-loop containing nucleotide triphosphate hydrolases"/>
    <property type="match status" value="1"/>
</dbReference>
<dbReference type="HAMAP" id="MF_00096">
    <property type="entry name" value="MutS"/>
    <property type="match status" value="1"/>
</dbReference>
<dbReference type="InterPro" id="IPR005748">
    <property type="entry name" value="DNA_mismatch_repair_MutS"/>
</dbReference>
<dbReference type="InterPro" id="IPR007695">
    <property type="entry name" value="DNA_mismatch_repair_MutS-lik_N"/>
</dbReference>
<dbReference type="InterPro" id="IPR017261">
    <property type="entry name" value="DNA_mismatch_repair_MutS/MSH"/>
</dbReference>
<dbReference type="InterPro" id="IPR000432">
    <property type="entry name" value="DNA_mismatch_repair_MutS_C"/>
</dbReference>
<dbReference type="InterPro" id="IPR007861">
    <property type="entry name" value="DNA_mismatch_repair_MutS_clamp"/>
</dbReference>
<dbReference type="InterPro" id="IPR007696">
    <property type="entry name" value="DNA_mismatch_repair_MutS_core"/>
</dbReference>
<dbReference type="InterPro" id="IPR016151">
    <property type="entry name" value="DNA_mismatch_repair_MutS_N"/>
</dbReference>
<dbReference type="InterPro" id="IPR036187">
    <property type="entry name" value="DNA_mismatch_repair_MutS_sf"/>
</dbReference>
<dbReference type="InterPro" id="IPR007860">
    <property type="entry name" value="DNA_mmatch_repair_MutS_con_dom"/>
</dbReference>
<dbReference type="InterPro" id="IPR045076">
    <property type="entry name" value="MutS"/>
</dbReference>
<dbReference type="InterPro" id="IPR036678">
    <property type="entry name" value="MutS_con_dom_sf"/>
</dbReference>
<dbReference type="InterPro" id="IPR027417">
    <property type="entry name" value="P-loop_NTPase"/>
</dbReference>
<dbReference type="NCBIfam" id="TIGR01070">
    <property type="entry name" value="mutS1"/>
    <property type="match status" value="1"/>
</dbReference>
<dbReference type="NCBIfam" id="NF003810">
    <property type="entry name" value="PRK05399.1"/>
    <property type="match status" value="1"/>
</dbReference>
<dbReference type="PANTHER" id="PTHR11361:SF34">
    <property type="entry name" value="DNA MISMATCH REPAIR PROTEIN MSH1, MITOCHONDRIAL"/>
    <property type="match status" value="1"/>
</dbReference>
<dbReference type="PANTHER" id="PTHR11361">
    <property type="entry name" value="DNA MISMATCH REPAIR PROTEIN MUTS FAMILY MEMBER"/>
    <property type="match status" value="1"/>
</dbReference>
<dbReference type="Pfam" id="PF01624">
    <property type="entry name" value="MutS_I"/>
    <property type="match status" value="1"/>
</dbReference>
<dbReference type="Pfam" id="PF05188">
    <property type="entry name" value="MutS_II"/>
    <property type="match status" value="1"/>
</dbReference>
<dbReference type="Pfam" id="PF05192">
    <property type="entry name" value="MutS_III"/>
    <property type="match status" value="1"/>
</dbReference>
<dbReference type="Pfam" id="PF05190">
    <property type="entry name" value="MutS_IV"/>
    <property type="match status" value="1"/>
</dbReference>
<dbReference type="Pfam" id="PF00488">
    <property type="entry name" value="MutS_V"/>
    <property type="match status" value="1"/>
</dbReference>
<dbReference type="PIRSF" id="PIRSF037677">
    <property type="entry name" value="DNA_mis_repair_Msh6"/>
    <property type="match status" value="1"/>
</dbReference>
<dbReference type="SMART" id="SM00534">
    <property type="entry name" value="MUTSac"/>
    <property type="match status" value="1"/>
</dbReference>
<dbReference type="SMART" id="SM00533">
    <property type="entry name" value="MUTSd"/>
    <property type="match status" value="1"/>
</dbReference>
<dbReference type="SUPFAM" id="SSF55271">
    <property type="entry name" value="DNA repair protein MutS, domain I"/>
    <property type="match status" value="1"/>
</dbReference>
<dbReference type="SUPFAM" id="SSF53150">
    <property type="entry name" value="DNA repair protein MutS, domain II"/>
    <property type="match status" value="1"/>
</dbReference>
<dbReference type="SUPFAM" id="SSF48334">
    <property type="entry name" value="DNA repair protein MutS, domain III"/>
    <property type="match status" value="1"/>
</dbReference>
<dbReference type="SUPFAM" id="SSF52540">
    <property type="entry name" value="P-loop containing nucleoside triphosphate hydrolases"/>
    <property type="match status" value="1"/>
</dbReference>
<dbReference type="PROSITE" id="PS00486">
    <property type="entry name" value="DNA_MISMATCH_REPAIR_2"/>
    <property type="match status" value="1"/>
</dbReference>
<comment type="function">
    <text evidence="1">This protein is involved in the repair of mismatches in DNA. It is possible that it carries out the mismatch recognition step. This protein has a weak ATPase activity.</text>
</comment>
<comment type="similarity">
    <text evidence="1">Belongs to the DNA mismatch repair MutS family.</text>
</comment>
<gene>
    <name evidence="1" type="primary">mutS</name>
    <name type="ordered locus">M28_Spy1814</name>
</gene>
<reference key="1">
    <citation type="journal article" date="2005" name="J. Infect. Dis.">
        <title>Genome sequence of a serotype M28 strain of group A Streptococcus: potential new insights into puerperal sepsis and bacterial disease specificity.</title>
        <authorList>
            <person name="Green N.M."/>
            <person name="Zhang S."/>
            <person name="Porcella S.F."/>
            <person name="Nagiec M.J."/>
            <person name="Barbian K.D."/>
            <person name="Beres S.B."/>
            <person name="Lefebvre R.B."/>
            <person name="Musser J.M."/>
        </authorList>
    </citation>
    <scope>NUCLEOTIDE SEQUENCE [LARGE SCALE GENOMIC DNA]</scope>
    <source>
        <strain>MGAS6180</strain>
    </source>
</reference>
<feature type="chain" id="PRO_0000224410" description="DNA mismatch repair protein MutS">
    <location>
        <begin position="1"/>
        <end position="851"/>
    </location>
</feature>
<feature type="binding site" evidence="1">
    <location>
        <begin position="602"/>
        <end position="609"/>
    </location>
    <ligand>
        <name>ATP</name>
        <dbReference type="ChEBI" id="CHEBI:30616"/>
    </ligand>
</feature>
<evidence type="ECO:0000255" key="1">
    <source>
        <dbReference type="HAMAP-Rule" id="MF_00096"/>
    </source>
</evidence>